<evidence type="ECO:0000255" key="1">
    <source>
        <dbReference type="HAMAP-Rule" id="MF_00463"/>
    </source>
</evidence>
<reference key="1">
    <citation type="submission" date="2007-10" db="EMBL/GenBank/DDBJ databases">
        <title>Complete sequence of Shewanella pealeana ATCC 700345.</title>
        <authorList>
            <consortium name="US DOE Joint Genome Institute"/>
            <person name="Copeland A."/>
            <person name="Lucas S."/>
            <person name="Lapidus A."/>
            <person name="Barry K."/>
            <person name="Glavina del Rio T."/>
            <person name="Dalin E."/>
            <person name="Tice H."/>
            <person name="Pitluck S."/>
            <person name="Chertkov O."/>
            <person name="Brettin T."/>
            <person name="Bruce D."/>
            <person name="Detter J.C."/>
            <person name="Han C."/>
            <person name="Schmutz J."/>
            <person name="Larimer F."/>
            <person name="Land M."/>
            <person name="Hauser L."/>
            <person name="Kyrpides N."/>
            <person name="Kim E."/>
            <person name="Zhao J.-S.Z."/>
            <person name="Manno D."/>
            <person name="Hawari J."/>
            <person name="Richardson P."/>
        </authorList>
    </citation>
    <scope>NUCLEOTIDE SEQUENCE [LARGE SCALE GENOMIC DNA]</scope>
    <source>
        <strain>ATCC 700345 / ANG-SQ1</strain>
    </source>
</reference>
<organism>
    <name type="scientific">Shewanella pealeana (strain ATCC 700345 / ANG-SQ1)</name>
    <dbReference type="NCBI Taxonomy" id="398579"/>
    <lineage>
        <taxon>Bacteria</taxon>
        <taxon>Pseudomonadati</taxon>
        <taxon>Pseudomonadota</taxon>
        <taxon>Gammaproteobacteria</taxon>
        <taxon>Alteromonadales</taxon>
        <taxon>Shewanellaceae</taxon>
        <taxon>Shewanella</taxon>
    </lineage>
</organism>
<gene>
    <name evidence="1" type="primary">rnfB</name>
    <name type="ordered locus">Spea_2354</name>
</gene>
<feature type="chain" id="PRO_1000081166" description="Ion-translocating oxidoreductase complex subunit B">
    <location>
        <begin position="1"/>
        <end position="189"/>
    </location>
</feature>
<feature type="domain" description="4Fe-4S" evidence="1">
    <location>
        <begin position="32"/>
        <end position="90"/>
    </location>
</feature>
<feature type="domain" description="4Fe-4S ferredoxin-type 1" evidence="1">
    <location>
        <begin position="105"/>
        <end position="134"/>
    </location>
</feature>
<feature type="domain" description="4Fe-4S ferredoxin-type 2" evidence="1">
    <location>
        <begin position="135"/>
        <end position="164"/>
    </location>
</feature>
<feature type="region of interest" description="Hydrophobic" evidence="1">
    <location>
        <begin position="1"/>
        <end position="26"/>
    </location>
</feature>
<feature type="binding site" evidence="1">
    <location>
        <position position="49"/>
    </location>
    <ligand>
        <name>[4Fe-4S] cluster</name>
        <dbReference type="ChEBI" id="CHEBI:49883"/>
        <label>1</label>
    </ligand>
</feature>
<feature type="binding site" evidence="1">
    <location>
        <position position="52"/>
    </location>
    <ligand>
        <name>[4Fe-4S] cluster</name>
        <dbReference type="ChEBI" id="CHEBI:49883"/>
        <label>1</label>
    </ligand>
</feature>
<feature type="binding site" evidence="1">
    <location>
        <position position="57"/>
    </location>
    <ligand>
        <name>[4Fe-4S] cluster</name>
        <dbReference type="ChEBI" id="CHEBI:49883"/>
        <label>1</label>
    </ligand>
</feature>
<feature type="binding site" evidence="1">
    <location>
        <position position="73"/>
    </location>
    <ligand>
        <name>[4Fe-4S] cluster</name>
        <dbReference type="ChEBI" id="CHEBI:49883"/>
        <label>1</label>
    </ligand>
</feature>
<feature type="binding site" evidence="1">
    <location>
        <position position="114"/>
    </location>
    <ligand>
        <name>[4Fe-4S] cluster</name>
        <dbReference type="ChEBI" id="CHEBI:49883"/>
        <label>2</label>
    </ligand>
</feature>
<feature type="binding site" evidence="1">
    <location>
        <position position="117"/>
    </location>
    <ligand>
        <name>[4Fe-4S] cluster</name>
        <dbReference type="ChEBI" id="CHEBI:49883"/>
        <label>2</label>
    </ligand>
</feature>
<feature type="binding site" evidence="1">
    <location>
        <position position="120"/>
    </location>
    <ligand>
        <name>[4Fe-4S] cluster</name>
        <dbReference type="ChEBI" id="CHEBI:49883"/>
        <label>2</label>
    </ligand>
</feature>
<feature type="binding site" evidence="1">
    <location>
        <position position="124"/>
    </location>
    <ligand>
        <name>[4Fe-4S] cluster</name>
        <dbReference type="ChEBI" id="CHEBI:49883"/>
        <label>3</label>
    </ligand>
</feature>
<feature type="binding site" evidence="1">
    <location>
        <position position="144"/>
    </location>
    <ligand>
        <name>[4Fe-4S] cluster</name>
        <dbReference type="ChEBI" id="CHEBI:49883"/>
        <label>3</label>
    </ligand>
</feature>
<feature type="binding site" evidence="1">
    <location>
        <position position="147"/>
    </location>
    <ligand>
        <name>[4Fe-4S] cluster</name>
        <dbReference type="ChEBI" id="CHEBI:49883"/>
        <label>3</label>
    </ligand>
</feature>
<feature type="binding site" evidence="1">
    <location>
        <position position="150"/>
    </location>
    <ligand>
        <name>[4Fe-4S] cluster</name>
        <dbReference type="ChEBI" id="CHEBI:49883"/>
        <label>3</label>
    </ligand>
</feature>
<feature type="binding site" evidence="1">
    <location>
        <position position="154"/>
    </location>
    <ligand>
        <name>[4Fe-4S] cluster</name>
        <dbReference type="ChEBI" id="CHEBI:49883"/>
        <label>2</label>
    </ligand>
</feature>
<name>RNFB_SHEPA</name>
<comment type="function">
    <text evidence="1">Part of a membrane-bound complex that couples electron transfer with translocation of ions across the membrane.</text>
</comment>
<comment type="cofactor">
    <cofactor evidence="1">
        <name>[4Fe-4S] cluster</name>
        <dbReference type="ChEBI" id="CHEBI:49883"/>
    </cofactor>
    <text evidence="1">Binds 3 [4Fe-4S] clusters.</text>
</comment>
<comment type="subunit">
    <text evidence="1">The complex is composed of six subunits: RnfA, RnfB, RnfC, RnfD, RnfE and RnfG.</text>
</comment>
<comment type="subcellular location">
    <subcellularLocation>
        <location evidence="1">Cell inner membrane</location>
    </subcellularLocation>
</comment>
<comment type="similarity">
    <text evidence="1">Belongs to the 4Fe4S bacterial-type ferredoxin family. RnfB subfamily.</text>
</comment>
<proteinExistence type="inferred from homology"/>
<dbReference type="EC" id="7.-.-.-" evidence="1"/>
<dbReference type="EMBL" id="CP000851">
    <property type="protein sequence ID" value="ABV87674.1"/>
    <property type="molecule type" value="Genomic_DNA"/>
</dbReference>
<dbReference type="RefSeq" id="WP_012155588.1">
    <property type="nucleotide sequence ID" value="NC_009901.1"/>
</dbReference>
<dbReference type="STRING" id="398579.Spea_2354"/>
<dbReference type="KEGG" id="spl:Spea_2354"/>
<dbReference type="eggNOG" id="COG2878">
    <property type="taxonomic scope" value="Bacteria"/>
</dbReference>
<dbReference type="HOGENOM" id="CLU_063448_2_0_6"/>
<dbReference type="OrthoDB" id="9789936at2"/>
<dbReference type="Proteomes" id="UP000002608">
    <property type="component" value="Chromosome"/>
</dbReference>
<dbReference type="GO" id="GO:0005886">
    <property type="term" value="C:plasma membrane"/>
    <property type="evidence" value="ECO:0007669"/>
    <property type="project" value="UniProtKB-SubCell"/>
</dbReference>
<dbReference type="GO" id="GO:0051539">
    <property type="term" value="F:4 iron, 4 sulfur cluster binding"/>
    <property type="evidence" value="ECO:0007669"/>
    <property type="project" value="UniProtKB-UniRule"/>
</dbReference>
<dbReference type="GO" id="GO:0009055">
    <property type="term" value="F:electron transfer activity"/>
    <property type="evidence" value="ECO:0007669"/>
    <property type="project" value="InterPro"/>
</dbReference>
<dbReference type="GO" id="GO:0046872">
    <property type="term" value="F:metal ion binding"/>
    <property type="evidence" value="ECO:0007669"/>
    <property type="project" value="UniProtKB-KW"/>
</dbReference>
<dbReference type="GO" id="GO:0022900">
    <property type="term" value="P:electron transport chain"/>
    <property type="evidence" value="ECO:0007669"/>
    <property type="project" value="UniProtKB-UniRule"/>
</dbReference>
<dbReference type="FunFam" id="1.10.15.40:FF:000001">
    <property type="entry name" value="Ion-translocating oxidoreductase complex subunit B"/>
    <property type="match status" value="1"/>
</dbReference>
<dbReference type="Gene3D" id="3.30.70.20">
    <property type="match status" value="2"/>
</dbReference>
<dbReference type="Gene3D" id="1.10.15.40">
    <property type="entry name" value="Electron transport complex subunit B, putative Fe-S cluster"/>
    <property type="match status" value="1"/>
</dbReference>
<dbReference type="HAMAP" id="MF_00463">
    <property type="entry name" value="RsxB_RnfB"/>
    <property type="match status" value="1"/>
</dbReference>
<dbReference type="InterPro" id="IPR007202">
    <property type="entry name" value="4Fe-4S_dom"/>
</dbReference>
<dbReference type="InterPro" id="IPR017896">
    <property type="entry name" value="4Fe4S_Fe-S-bd"/>
</dbReference>
<dbReference type="InterPro" id="IPR017900">
    <property type="entry name" value="4Fe4S_Fe_S_CS"/>
</dbReference>
<dbReference type="InterPro" id="IPR010207">
    <property type="entry name" value="Elect_transpt_cplx_RnfB/RsxB"/>
</dbReference>
<dbReference type="InterPro" id="IPR016463">
    <property type="entry name" value="RnfB/RsxB_Proteobac"/>
</dbReference>
<dbReference type="InterPro" id="IPR050294">
    <property type="entry name" value="RnfB_subfamily"/>
</dbReference>
<dbReference type="NCBIfam" id="NF003475">
    <property type="entry name" value="PRK05113.1"/>
    <property type="match status" value="1"/>
</dbReference>
<dbReference type="NCBIfam" id="TIGR01944">
    <property type="entry name" value="rnfB"/>
    <property type="match status" value="1"/>
</dbReference>
<dbReference type="PANTHER" id="PTHR42859:SF3">
    <property type="entry name" value="ION-TRANSLOCATING OXIDOREDUCTASE COMPLEX SUBUNIT B"/>
    <property type="match status" value="1"/>
</dbReference>
<dbReference type="PANTHER" id="PTHR42859">
    <property type="entry name" value="OXIDOREDUCTASE"/>
    <property type="match status" value="1"/>
</dbReference>
<dbReference type="Pfam" id="PF14697">
    <property type="entry name" value="Fer4_21"/>
    <property type="match status" value="1"/>
</dbReference>
<dbReference type="Pfam" id="PF04060">
    <property type="entry name" value="FeS"/>
    <property type="match status" value="1"/>
</dbReference>
<dbReference type="PIRSF" id="PIRSF005784">
    <property type="entry name" value="Elect_transpt_RnfB"/>
    <property type="match status" value="1"/>
</dbReference>
<dbReference type="SUPFAM" id="SSF54862">
    <property type="entry name" value="4Fe-4S ferredoxins"/>
    <property type="match status" value="1"/>
</dbReference>
<dbReference type="PROSITE" id="PS51656">
    <property type="entry name" value="4FE4S"/>
    <property type="match status" value="1"/>
</dbReference>
<dbReference type="PROSITE" id="PS00198">
    <property type="entry name" value="4FE4S_FER_1"/>
    <property type="match status" value="2"/>
</dbReference>
<dbReference type="PROSITE" id="PS51379">
    <property type="entry name" value="4FE4S_FER_2"/>
    <property type="match status" value="2"/>
</dbReference>
<keyword id="KW-0004">4Fe-4S</keyword>
<keyword id="KW-0997">Cell inner membrane</keyword>
<keyword id="KW-1003">Cell membrane</keyword>
<keyword id="KW-0249">Electron transport</keyword>
<keyword id="KW-0408">Iron</keyword>
<keyword id="KW-0411">Iron-sulfur</keyword>
<keyword id="KW-0472">Membrane</keyword>
<keyword id="KW-0479">Metal-binding</keyword>
<keyword id="KW-1185">Reference proteome</keyword>
<keyword id="KW-0677">Repeat</keyword>
<keyword id="KW-1278">Translocase</keyword>
<keyword id="KW-0813">Transport</keyword>
<sequence>MSAIVIAIVVLTILALVFGVLLGFAAEKFKVEGNPLTDQIEALLPQTQCGQCGYPGCRPYAEAIANGDKVNKCPPGGAATMEKLADLMGVEPEPLNVTEAVQIKKVAYIREDECIGCTKCIQACPVDAILGSGKLMHTVITDYCTGCDLCVAPCPVDCIDMLPVEQTTKTWNWQLNAIPVKQLQEDKPC</sequence>
<protein>
    <recommendedName>
        <fullName evidence="1">Ion-translocating oxidoreductase complex subunit B</fullName>
        <ecNumber evidence="1">7.-.-.-</ecNumber>
    </recommendedName>
    <alternativeName>
        <fullName evidence="1">Rnf electron transport complex subunit B</fullName>
    </alternativeName>
</protein>
<accession>A8H537</accession>